<organism>
    <name type="scientific">Sinapis alba</name>
    <name type="common">White mustard</name>
    <name type="synonym">Brassica hirta</name>
    <dbReference type="NCBI Taxonomy" id="3728"/>
    <lineage>
        <taxon>Eukaryota</taxon>
        <taxon>Viridiplantae</taxon>
        <taxon>Streptophyta</taxon>
        <taxon>Embryophyta</taxon>
        <taxon>Tracheophyta</taxon>
        <taxon>Spermatophyta</taxon>
        <taxon>Magnoliopsida</taxon>
        <taxon>eudicotyledons</taxon>
        <taxon>Gunneridae</taxon>
        <taxon>Pentapetalae</taxon>
        <taxon>rosids</taxon>
        <taxon>malvids</taxon>
        <taxon>Brassicales</taxon>
        <taxon>Brassicaceae</taxon>
        <taxon>Brassiceae</taxon>
        <taxon>Sinapis</taxon>
    </lineage>
</organism>
<evidence type="ECO:0000255" key="1">
    <source>
        <dbReference type="PROSITE-ProRule" id="PRU00176"/>
    </source>
</evidence>
<evidence type="ECO:0000256" key="2">
    <source>
        <dbReference type="SAM" id="MobiDB-lite"/>
    </source>
</evidence>
<sequence>MASPDVEYRCFVGGLAWATDDRALETAFSQYGEVLDSKIINDRETGRSRGFGFVTFKDEKSMKDAIEGMNGQDLDGRSITVNEAQSRGSGGGGGGRGGGGGYRSGGGGGYGGGGGGYGGGGREGGYSGGGGGYSSRGGGGGGYGGGGRRDGGEGGGYGGSGGGGGW</sequence>
<feature type="chain" id="PRO_0000081603" description="Glycine-rich RNA-binding protein GRP1A">
    <location>
        <begin position="1"/>
        <end position="166"/>
    </location>
</feature>
<feature type="domain" description="RRM" evidence="1">
    <location>
        <begin position="8"/>
        <end position="86"/>
    </location>
</feature>
<feature type="region of interest" description="Disordered" evidence="2">
    <location>
        <begin position="68"/>
        <end position="166"/>
    </location>
</feature>
<feature type="compositionally biased region" description="Gly residues" evidence="2">
    <location>
        <begin position="88"/>
        <end position="146"/>
    </location>
</feature>
<feature type="compositionally biased region" description="Gly residues" evidence="2">
    <location>
        <begin position="153"/>
        <end position="166"/>
    </location>
</feature>
<reference key="1">
    <citation type="journal article" date="1994" name="Plant J.">
        <title>A light- and temperature-entrained circadian clock controls expression of transcripts encoding nuclear proteins with homology to RNA-binding proteins in meristematic tissue.</title>
        <authorList>
            <person name="Heintzen C."/>
            <person name="Melzer S."/>
            <person name="Fischer R."/>
            <person name="Kappeler S."/>
            <person name="Apel K."/>
            <person name="Staiger D."/>
        </authorList>
    </citation>
    <scope>NUCLEOTIDE SEQUENCE [MRNA]</scope>
</reference>
<dbReference type="EMBL" id="L31374">
    <property type="protein sequence ID" value="AAA59212.1"/>
    <property type="molecule type" value="mRNA"/>
</dbReference>
<dbReference type="PIR" id="T10463">
    <property type="entry name" value="T10463"/>
</dbReference>
<dbReference type="SMR" id="P49310"/>
<dbReference type="GO" id="GO:0005634">
    <property type="term" value="C:nucleus"/>
    <property type="evidence" value="ECO:0007669"/>
    <property type="project" value="UniProtKB-SubCell"/>
</dbReference>
<dbReference type="GO" id="GO:0003723">
    <property type="term" value="F:RNA binding"/>
    <property type="evidence" value="ECO:0007669"/>
    <property type="project" value="UniProtKB-KW"/>
</dbReference>
<dbReference type="GO" id="GO:0016070">
    <property type="term" value="P:RNA metabolic process"/>
    <property type="evidence" value="ECO:0007669"/>
    <property type="project" value="UniProtKB-ARBA"/>
</dbReference>
<dbReference type="CDD" id="cd21608">
    <property type="entry name" value="RRM2_NsCP33_like"/>
    <property type="match status" value="1"/>
</dbReference>
<dbReference type="FunFam" id="3.30.70.330:FF:000430">
    <property type="entry name" value="Glycine-rich RNA-binding protein GRP1A"/>
    <property type="match status" value="1"/>
</dbReference>
<dbReference type="Gene3D" id="3.30.70.330">
    <property type="match status" value="1"/>
</dbReference>
<dbReference type="InterPro" id="IPR012677">
    <property type="entry name" value="Nucleotide-bd_a/b_plait_sf"/>
</dbReference>
<dbReference type="InterPro" id="IPR035979">
    <property type="entry name" value="RBD_domain_sf"/>
</dbReference>
<dbReference type="InterPro" id="IPR048289">
    <property type="entry name" value="RRM2_NsCP33-like"/>
</dbReference>
<dbReference type="InterPro" id="IPR000504">
    <property type="entry name" value="RRM_dom"/>
</dbReference>
<dbReference type="InterPro" id="IPR052462">
    <property type="entry name" value="SLIRP/GR-RBP-like"/>
</dbReference>
<dbReference type="PANTHER" id="PTHR48027">
    <property type="entry name" value="HETEROGENEOUS NUCLEAR RIBONUCLEOPROTEIN 87F-RELATED"/>
    <property type="match status" value="1"/>
</dbReference>
<dbReference type="Pfam" id="PF00076">
    <property type="entry name" value="RRM_1"/>
    <property type="match status" value="1"/>
</dbReference>
<dbReference type="SMART" id="SM00360">
    <property type="entry name" value="RRM"/>
    <property type="match status" value="1"/>
</dbReference>
<dbReference type="SUPFAM" id="SSF54928">
    <property type="entry name" value="RNA-binding domain, RBD"/>
    <property type="match status" value="1"/>
</dbReference>
<dbReference type="PROSITE" id="PS50102">
    <property type="entry name" value="RRM"/>
    <property type="match status" value="1"/>
</dbReference>
<protein>
    <recommendedName>
        <fullName>Glycine-rich RNA-binding protein GRP1A</fullName>
    </recommendedName>
</protein>
<name>GRP1_SINAL</name>
<proteinExistence type="evidence at transcript level"/>
<keyword id="KW-0539">Nucleus</keyword>
<keyword id="KW-0694">RNA-binding</keyword>
<comment type="function">
    <text>May play a general role in circadian phenomena associated with meristematic tissue.</text>
</comment>
<comment type="subcellular location">
    <subcellularLocation>
        <location>Nucleus</location>
    </subcellularLocation>
</comment>
<comment type="tissue specificity">
    <text>Predominantly expressed in meristematic and growing tissue.</text>
</comment>
<comment type="developmental stage">
    <text>Its levels oscillate in plants grown in light/dark cycles with maxima between Zeitgeber time zt8 and zt12 (8-12 hours after onset of illumination) and minima around zt20.</text>
</comment>
<accession>P49310</accession>